<organism>
    <name type="scientific">Staphylococcus aureus (strain USA300)</name>
    <dbReference type="NCBI Taxonomy" id="367830"/>
    <lineage>
        <taxon>Bacteria</taxon>
        <taxon>Bacillati</taxon>
        <taxon>Bacillota</taxon>
        <taxon>Bacilli</taxon>
        <taxon>Bacillales</taxon>
        <taxon>Staphylococcaceae</taxon>
        <taxon>Staphylococcus</taxon>
    </lineage>
</organism>
<protein>
    <recommendedName>
        <fullName evidence="1">UPF0358 protein SAUSA300_1012</fullName>
    </recommendedName>
</protein>
<feature type="chain" id="PRO_1000069005" description="UPF0358 protein SAUSA300_1012">
    <location>
        <begin position="1"/>
        <end position="91"/>
    </location>
</feature>
<comment type="similarity">
    <text evidence="1">Belongs to the UPF0358 family.</text>
</comment>
<name>Y1012_STAA3</name>
<sequence>MAKQATMKNAALKQLTKDADEILHLIKVQLDNLTLPSCPLYEEVLDTQMFGLQKEVDFAVKLGLVDREDGKQIMLRLEKELSKLHEAFTLV</sequence>
<evidence type="ECO:0000255" key="1">
    <source>
        <dbReference type="HAMAP-Rule" id="MF_01560"/>
    </source>
</evidence>
<gene>
    <name type="ordered locus">SAUSA300_1012</name>
</gene>
<dbReference type="EMBL" id="CP000255">
    <property type="protein sequence ID" value="ABD22267.1"/>
    <property type="molecule type" value="Genomic_DNA"/>
</dbReference>
<dbReference type="RefSeq" id="WP_001118417.1">
    <property type="nucleotide sequence ID" value="NZ_CP027476.1"/>
</dbReference>
<dbReference type="SMR" id="Q2FHW8"/>
<dbReference type="KEGG" id="saa:SAUSA300_1012"/>
<dbReference type="HOGENOM" id="CLU_160493_1_0_9"/>
<dbReference type="OMA" id="KLIQVQM"/>
<dbReference type="Proteomes" id="UP000001939">
    <property type="component" value="Chromosome"/>
</dbReference>
<dbReference type="Gene3D" id="1.10.287.750">
    <property type="entry name" value="SO2669-like"/>
    <property type="match status" value="1"/>
</dbReference>
<dbReference type="HAMAP" id="MF_01560">
    <property type="entry name" value="UPF0358"/>
    <property type="match status" value="1"/>
</dbReference>
<dbReference type="InterPro" id="IPR009983">
    <property type="entry name" value="UPF0358"/>
</dbReference>
<dbReference type="InterPro" id="IPR036270">
    <property type="entry name" value="UPF0358_sf"/>
</dbReference>
<dbReference type="NCBIfam" id="NF010187">
    <property type="entry name" value="PRK13666.1"/>
    <property type="match status" value="1"/>
</dbReference>
<dbReference type="Pfam" id="PF07408">
    <property type="entry name" value="DUF1507"/>
    <property type="match status" value="1"/>
</dbReference>
<dbReference type="SUPFAM" id="SSF140404">
    <property type="entry name" value="EF2458-like"/>
    <property type="match status" value="1"/>
</dbReference>
<proteinExistence type="inferred from homology"/>
<accession>Q2FHW8</accession>
<reference key="1">
    <citation type="journal article" date="2006" name="Lancet">
        <title>Complete genome sequence of USA300, an epidemic clone of community-acquired meticillin-resistant Staphylococcus aureus.</title>
        <authorList>
            <person name="Diep B.A."/>
            <person name="Gill S.R."/>
            <person name="Chang R.F."/>
            <person name="Phan T.H."/>
            <person name="Chen J.H."/>
            <person name="Davidson M.G."/>
            <person name="Lin F."/>
            <person name="Lin J."/>
            <person name="Carleton H.A."/>
            <person name="Mongodin E.F."/>
            <person name="Sensabaugh G.F."/>
            <person name="Perdreau-Remington F."/>
        </authorList>
    </citation>
    <scope>NUCLEOTIDE SEQUENCE [LARGE SCALE GENOMIC DNA]</scope>
    <source>
        <strain>USA300</strain>
    </source>
</reference>